<proteinExistence type="evidence at transcript level"/>
<reference key="1">
    <citation type="submission" date="2004-07" db="EMBL/GenBank/DDBJ databases">
        <title>Cloning and identification of SLAN expressed in fetal sheep blood using DDRT-PCR.</title>
        <authorList>
            <person name="Zhang J."/>
        </authorList>
    </citation>
    <scope>NUCLEOTIDE SEQUENCE [MRNA]</scope>
    <source>
        <tissue>Fetal blood</tissue>
    </source>
</reference>
<reference key="2">
    <citation type="journal article" date="2005" name="Cerebellum">
        <title>The Anp32 family of proteins containing leucine-rich repeats.</title>
        <authorList>
            <person name="Matilla A."/>
            <person name="Radrizzani M."/>
        </authorList>
    </citation>
    <scope>GENE FAMILY</scope>
    <scope>NOMENCLATURE</scope>
</reference>
<comment type="function">
    <text evidence="1">Multifunctional protein working as a cell cycle progression factor as well as a cell survival factor. Required for the progression from the G1 to the S phase. Anti-apoptotic protein which functions as a caspase-3 inhibitor. Has no phosphatase 2A (PP2A) inhibitor activity. Exhibits histone chaperone properties, stimulating core histones to assemble into a nucleosome (By similarity).</text>
</comment>
<comment type="subunit">
    <text evidence="1">Monomer. Interacts with histones H3 and H4 (By similarity).</text>
</comment>
<comment type="subcellular location">
    <subcellularLocation>
        <location>Nucleus</location>
    </subcellularLocation>
    <text>Accumulates in the nuclei at the S phase.</text>
</comment>
<comment type="domain">
    <text evidence="1">Histone binding is mediated by the concave surface of the LRR region.</text>
</comment>
<comment type="PTM">
    <text evidence="1">Some glutamate residues are glycylated by TTLL8. This modification occurs exclusively on glutamate residues and results in a glycine chain on the gamma-carboxyl group (By similarity).</text>
</comment>
<comment type="similarity">
    <text evidence="5">Belongs to the ANP32 family.</text>
</comment>
<feature type="chain" id="PRO_0000137596" description="Acidic leucine-rich nuclear phosphoprotein 32 family member B">
    <location>
        <begin position="1"/>
        <end position="261"/>
    </location>
</feature>
<feature type="repeat" description="LRR 1">
    <location>
        <begin position="16"/>
        <end position="40"/>
    </location>
</feature>
<feature type="repeat" description="LRR 2">
    <location>
        <begin position="43"/>
        <end position="64"/>
    </location>
</feature>
<feature type="repeat" description="LRR 3">
    <location>
        <begin position="65"/>
        <end position="87"/>
    </location>
</feature>
<feature type="repeat" description="LRR 4">
    <location>
        <begin position="89"/>
        <end position="110"/>
    </location>
</feature>
<feature type="domain" description="LRRCT">
    <location>
        <begin position="123"/>
        <end position="161"/>
    </location>
</feature>
<feature type="region of interest" description="Disordered" evidence="4">
    <location>
        <begin position="149"/>
        <end position="261"/>
    </location>
</feature>
<feature type="compositionally biased region" description="Acidic residues" evidence="4">
    <location>
        <begin position="157"/>
        <end position="243"/>
    </location>
</feature>
<feature type="compositionally biased region" description="Basic and acidic residues" evidence="4">
    <location>
        <begin position="244"/>
        <end position="254"/>
    </location>
</feature>
<feature type="modified residue" description="N6-acetyllysine" evidence="2">
    <location>
        <position position="86"/>
    </location>
</feature>
<feature type="modified residue" description="Phosphoserine" evidence="3">
    <location>
        <position position="158"/>
    </location>
</feature>
<feature type="modified residue" description="Phosphothreonine" evidence="2">
    <location>
        <position position="254"/>
    </location>
</feature>
<name>AN32B_SHEEP</name>
<organism>
    <name type="scientific">Ovis aries</name>
    <name type="common">Sheep</name>
    <dbReference type="NCBI Taxonomy" id="9940"/>
    <lineage>
        <taxon>Eukaryota</taxon>
        <taxon>Metazoa</taxon>
        <taxon>Chordata</taxon>
        <taxon>Craniata</taxon>
        <taxon>Vertebrata</taxon>
        <taxon>Euteleostomi</taxon>
        <taxon>Mammalia</taxon>
        <taxon>Eutheria</taxon>
        <taxon>Laurasiatheria</taxon>
        <taxon>Artiodactyla</taxon>
        <taxon>Ruminantia</taxon>
        <taxon>Pecora</taxon>
        <taxon>Bovidae</taxon>
        <taxon>Caprinae</taxon>
        <taxon>Ovis</taxon>
    </lineage>
</organism>
<sequence length="261" mass="29741">MDMKRRIHLELRNRTPAAVRELVLDNCKSNDGKIEGLTAEFVNLEFLSLINVGLISVSNLPKLPKLKKLELSDNRICGGLDMLAEKLPNLTHLNLSGNKLKDIGTLEPLKKLECLKSLDLFNCEVTNLNDYRESVFKLLPQLTYLDGYDREDREAPDSDAEVDGVDEEEDDEEGENEDKEEDEDGEEEEFDDEEDDDEDEDVEGEEDEDKVSGEEEEFGHDGEADEDDEDEDEDEDEDEEEEESGKGEGRKRETDDEGEDD</sequence>
<keyword id="KW-0007">Acetylation</keyword>
<keyword id="KW-0143">Chaperone</keyword>
<keyword id="KW-0433">Leucine-rich repeat</keyword>
<keyword id="KW-0539">Nucleus</keyword>
<keyword id="KW-0597">Phosphoprotein</keyword>
<keyword id="KW-1185">Reference proteome</keyword>
<keyword id="KW-0677">Repeat</keyword>
<dbReference type="EMBL" id="AJ783860">
    <property type="protein sequence ID" value="CAH04953.1"/>
    <property type="molecule type" value="mRNA"/>
</dbReference>
<dbReference type="BMRB" id="Q6A1I3"/>
<dbReference type="SMR" id="Q6A1I3"/>
<dbReference type="STRING" id="9940.ENSOARP00000008546"/>
<dbReference type="PaxDb" id="9940-ENSOARP00000008546"/>
<dbReference type="eggNOG" id="KOG2739">
    <property type="taxonomic scope" value="Eukaryota"/>
</dbReference>
<dbReference type="Proteomes" id="UP000002356">
    <property type="component" value="Unplaced"/>
</dbReference>
<dbReference type="GO" id="GO:0005634">
    <property type="term" value="C:nucleus"/>
    <property type="evidence" value="ECO:0007669"/>
    <property type="project" value="UniProtKB-SubCell"/>
</dbReference>
<dbReference type="GO" id="GO:0042393">
    <property type="term" value="F:histone binding"/>
    <property type="evidence" value="ECO:0007669"/>
    <property type="project" value="TreeGrafter"/>
</dbReference>
<dbReference type="GO" id="GO:0042981">
    <property type="term" value="P:regulation of apoptotic process"/>
    <property type="evidence" value="ECO:0007669"/>
    <property type="project" value="TreeGrafter"/>
</dbReference>
<dbReference type="FunFam" id="3.80.10.10:FF:000003">
    <property type="entry name" value="Acidic leucine-rich nuclear phosphoprotein 32 family member A"/>
    <property type="match status" value="1"/>
</dbReference>
<dbReference type="Gene3D" id="3.80.10.10">
    <property type="entry name" value="Ribonuclease Inhibitor"/>
    <property type="match status" value="1"/>
</dbReference>
<dbReference type="InterPro" id="IPR045081">
    <property type="entry name" value="AN32"/>
</dbReference>
<dbReference type="InterPro" id="IPR001611">
    <property type="entry name" value="Leu-rich_rpt"/>
</dbReference>
<dbReference type="InterPro" id="IPR032675">
    <property type="entry name" value="LRR_dom_sf"/>
</dbReference>
<dbReference type="InterPro" id="IPR003603">
    <property type="entry name" value="U2A'_phosphoprotein32A_C"/>
</dbReference>
<dbReference type="PANTHER" id="PTHR11375">
    <property type="entry name" value="ACIDIC LEUCINE-RICH NUCLEAR PHOSPHOPROTEIN 32"/>
    <property type="match status" value="1"/>
</dbReference>
<dbReference type="PANTHER" id="PTHR11375:SF2">
    <property type="entry name" value="ACIDIC LEUCINE-RICH NUCLEAR PHOSPHOPROTEIN 32 FAMILY MEMBER B"/>
    <property type="match status" value="1"/>
</dbReference>
<dbReference type="Pfam" id="PF14580">
    <property type="entry name" value="LRR_9"/>
    <property type="match status" value="1"/>
</dbReference>
<dbReference type="SMART" id="SM00446">
    <property type="entry name" value="LRRcap"/>
    <property type="match status" value="1"/>
</dbReference>
<dbReference type="SUPFAM" id="SSF52058">
    <property type="entry name" value="L domain-like"/>
    <property type="match status" value="1"/>
</dbReference>
<dbReference type="PROSITE" id="PS51450">
    <property type="entry name" value="LRR"/>
    <property type="match status" value="4"/>
</dbReference>
<evidence type="ECO:0000250" key="1"/>
<evidence type="ECO:0000250" key="2">
    <source>
        <dbReference type="UniProtKB" id="Q92688"/>
    </source>
</evidence>
<evidence type="ECO:0000250" key="3">
    <source>
        <dbReference type="UniProtKB" id="Q9EST6"/>
    </source>
</evidence>
<evidence type="ECO:0000256" key="4">
    <source>
        <dbReference type="SAM" id="MobiDB-lite"/>
    </source>
</evidence>
<evidence type="ECO:0000305" key="5"/>
<gene>
    <name type="primary">ANP32B</name>
    <name type="synonym">APRIL</name>
</gene>
<protein>
    <recommendedName>
        <fullName>Acidic leucine-rich nuclear phosphoprotein 32 family member B</fullName>
    </recommendedName>
    <alternativeName>
        <fullName>Acidic protein rich in leucines</fullName>
    </alternativeName>
    <alternativeName>
        <fullName>Leucine-rich acidic nuclear protein</fullName>
        <shortName>LAN</shortName>
    </alternativeName>
</protein>
<accession>Q6A1I3</accession>